<evidence type="ECO:0000255" key="1">
    <source>
        <dbReference type="HAMAP-Rule" id="MF_00111"/>
    </source>
</evidence>
<comment type="function">
    <text evidence="1">Cell wall formation. Adds enolpyruvyl to UDP-N-acetylglucosamine.</text>
</comment>
<comment type="catalytic activity">
    <reaction evidence="1">
        <text>phosphoenolpyruvate + UDP-N-acetyl-alpha-D-glucosamine = UDP-N-acetyl-3-O-(1-carboxyvinyl)-alpha-D-glucosamine + phosphate</text>
        <dbReference type="Rhea" id="RHEA:18681"/>
        <dbReference type="ChEBI" id="CHEBI:43474"/>
        <dbReference type="ChEBI" id="CHEBI:57705"/>
        <dbReference type="ChEBI" id="CHEBI:58702"/>
        <dbReference type="ChEBI" id="CHEBI:68483"/>
        <dbReference type="EC" id="2.5.1.7"/>
    </reaction>
</comment>
<comment type="pathway">
    <text evidence="1">Cell wall biogenesis; peptidoglycan biosynthesis.</text>
</comment>
<comment type="subcellular location">
    <subcellularLocation>
        <location evidence="1">Cytoplasm</location>
    </subcellularLocation>
</comment>
<comment type="similarity">
    <text evidence="1">Belongs to the EPSP synthase family. MurA subfamily.</text>
</comment>
<feature type="chain" id="PRO_1000057728" description="UDP-N-acetylglucosamine 1-carboxyvinyltransferase">
    <location>
        <begin position="1"/>
        <end position="422"/>
    </location>
</feature>
<feature type="active site" description="Proton donor" evidence="1">
    <location>
        <position position="116"/>
    </location>
</feature>
<feature type="binding site" evidence="1">
    <location>
        <begin position="22"/>
        <end position="23"/>
    </location>
    <ligand>
        <name>phosphoenolpyruvate</name>
        <dbReference type="ChEBI" id="CHEBI:58702"/>
    </ligand>
</feature>
<feature type="binding site" evidence="1">
    <location>
        <position position="92"/>
    </location>
    <ligand>
        <name>UDP-N-acetyl-alpha-D-glucosamine</name>
        <dbReference type="ChEBI" id="CHEBI:57705"/>
    </ligand>
</feature>
<feature type="binding site" evidence="1">
    <location>
        <begin position="121"/>
        <end position="125"/>
    </location>
    <ligand>
        <name>UDP-N-acetyl-alpha-D-glucosamine</name>
        <dbReference type="ChEBI" id="CHEBI:57705"/>
    </ligand>
</feature>
<feature type="binding site" evidence="1">
    <location>
        <position position="307"/>
    </location>
    <ligand>
        <name>UDP-N-acetyl-alpha-D-glucosamine</name>
        <dbReference type="ChEBI" id="CHEBI:57705"/>
    </ligand>
</feature>
<feature type="binding site" evidence="1">
    <location>
        <position position="329"/>
    </location>
    <ligand>
        <name>UDP-N-acetyl-alpha-D-glucosamine</name>
        <dbReference type="ChEBI" id="CHEBI:57705"/>
    </ligand>
</feature>
<feature type="modified residue" description="2-(S-cysteinyl)pyruvic acid O-phosphothioketal" evidence="1">
    <location>
        <position position="116"/>
    </location>
</feature>
<name>MURA_ALIB4</name>
<sequence>MEYLKIVGGKDISGSVEISGAKNAALPLIACTILGKNEITIGNLPNVVDINTFLKLILKLGGSFVKEENKVKINTSTINNTTATYDIVKTMRASILVLGPLLARFGHCEVSLPGGCAIGQRPVDLHLKALEQMGAKIEILQGYIKATAPNGLKGAKIVFDKVTVGGTENIVMAAALAHGVTTIINAAKEPEIVQLCEVLANSGVKIEGIGTSKIVIEGTGQKLIDIKPFDVIPDRIEAGTYMCAAAITNKKLKINKVIPLHLEAVISKLEEMNFEVLQDENSVTILPTNEIKPVNIITTEYPGFPTDMQAQFMALATQANGTSTIDERLFENRFMHVSELLRLGADIHLNGNIATINGKMGSLNGTDVMATDLRASSALVLAALVANGETNIHRIYHLDRGYENLEGKLSLIGADVKRSKED</sequence>
<dbReference type="EC" id="2.5.1.7" evidence="1"/>
<dbReference type="EMBL" id="CP000361">
    <property type="protein sequence ID" value="ABV68083.1"/>
    <property type="molecule type" value="Genomic_DNA"/>
</dbReference>
<dbReference type="RefSeq" id="WP_012147796.1">
    <property type="nucleotide sequence ID" value="NC_009850.1"/>
</dbReference>
<dbReference type="SMR" id="A8EVW0"/>
<dbReference type="STRING" id="367737.Abu_1843"/>
<dbReference type="GeneID" id="24305163"/>
<dbReference type="KEGG" id="abu:Abu_1843"/>
<dbReference type="eggNOG" id="COG0766">
    <property type="taxonomic scope" value="Bacteria"/>
</dbReference>
<dbReference type="HOGENOM" id="CLU_027387_0_0_7"/>
<dbReference type="UniPathway" id="UPA00219"/>
<dbReference type="Proteomes" id="UP000001136">
    <property type="component" value="Chromosome"/>
</dbReference>
<dbReference type="GO" id="GO:0005737">
    <property type="term" value="C:cytoplasm"/>
    <property type="evidence" value="ECO:0007669"/>
    <property type="project" value="UniProtKB-SubCell"/>
</dbReference>
<dbReference type="GO" id="GO:0008760">
    <property type="term" value="F:UDP-N-acetylglucosamine 1-carboxyvinyltransferase activity"/>
    <property type="evidence" value="ECO:0007669"/>
    <property type="project" value="UniProtKB-UniRule"/>
</dbReference>
<dbReference type="GO" id="GO:0051301">
    <property type="term" value="P:cell division"/>
    <property type="evidence" value="ECO:0007669"/>
    <property type="project" value="UniProtKB-KW"/>
</dbReference>
<dbReference type="GO" id="GO:0071555">
    <property type="term" value="P:cell wall organization"/>
    <property type="evidence" value="ECO:0007669"/>
    <property type="project" value="UniProtKB-KW"/>
</dbReference>
<dbReference type="GO" id="GO:0009252">
    <property type="term" value="P:peptidoglycan biosynthetic process"/>
    <property type="evidence" value="ECO:0007669"/>
    <property type="project" value="UniProtKB-UniRule"/>
</dbReference>
<dbReference type="GO" id="GO:0008360">
    <property type="term" value="P:regulation of cell shape"/>
    <property type="evidence" value="ECO:0007669"/>
    <property type="project" value="UniProtKB-KW"/>
</dbReference>
<dbReference type="GO" id="GO:0019277">
    <property type="term" value="P:UDP-N-acetylgalactosamine biosynthetic process"/>
    <property type="evidence" value="ECO:0007669"/>
    <property type="project" value="InterPro"/>
</dbReference>
<dbReference type="CDD" id="cd01555">
    <property type="entry name" value="UdpNAET"/>
    <property type="match status" value="1"/>
</dbReference>
<dbReference type="FunFam" id="3.65.10.10:FF:000001">
    <property type="entry name" value="UDP-N-acetylglucosamine 1-carboxyvinyltransferase"/>
    <property type="match status" value="1"/>
</dbReference>
<dbReference type="Gene3D" id="3.65.10.10">
    <property type="entry name" value="Enolpyruvate transferase domain"/>
    <property type="match status" value="2"/>
</dbReference>
<dbReference type="HAMAP" id="MF_00111">
    <property type="entry name" value="MurA"/>
    <property type="match status" value="1"/>
</dbReference>
<dbReference type="InterPro" id="IPR001986">
    <property type="entry name" value="Enolpyruvate_Tfrase_dom"/>
</dbReference>
<dbReference type="InterPro" id="IPR036968">
    <property type="entry name" value="Enolpyruvate_Tfrase_sf"/>
</dbReference>
<dbReference type="InterPro" id="IPR050068">
    <property type="entry name" value="MurA_subfamily"/>
</dbReference>
<dbReference type="InterPro" id="IPR013792">
    <property type="entry name" value="RNA3'P_cycl/enolpyr_Trfase_a/b"/>
</dbReference>
<dbReference type="InterPro" id="IPR005750">
    <property type="entry name" value="UDP_GlcNAc_COvinyl_MurA"/>
</dbReference>
<dbReference type="NCBIfam" id="TIGR01072">
    <property type="entry name" value="murA"/>
    <property type="match status" value="1"/>
</dbReference>
<dbReference type="NCBIfam" id="NF006873">
    <property type="entry name" value="PRK09369.1"/>
    <property type="match status" value="1"/>
</dbReference>
<dbReference type="PANTHER" id="PTHR43783">
    <property type="entry name" value="UDP-N-ACETYLGLUCOSAMINE 1-CARBOXYVINYLTRANSFERASE"/>
    <property type="match status" value="1"/>
</dbReference>
<dbReference type="PANTHER" id="PTHR43783:SF1">
    <property type="entry name" value="UDP-N-ACETYLGLUCOSAMINE 1-CARBOXYVINYLTRANSFERASE"/>
    <property type="match status" value="1"/>
</dbReference>
<dbReference type="Pfam" id="PF00275">
    <property type="entry name" value="EPSP_synthase"/>
    <property type="match status" value="1"/>
</dbReference>
<dbReference type="SUPFAM" id="SSF55205">
    <property type="entry name" value="EPT/RTPC-like"/>
    <property type="match status" value="1"/>
</dbReference>
<organism>
    <name type="scientific">Aliarcobacter butzleri (strain RM4018)</name>
    <name type="common">Arcobacter butzleri</name>
    <dbReference type="NCBI Taxonomy" id="367737"/>
    <lineage>
        <taxon>Bacteria</taxon>
        <taxon>Pseudomonadati</taxon>
        <taxon>Campylobacterota</taxon>
        <taxon>Epsilonproteobacteria</taxon>
        <taxon>Campylobacterales</taxon>
        <taxon>Arcobacteraceae</taxon>
        <taxon>Aliarcobacter</taxon>
    </lineage>
</organism>
<proteinExistence type="inferred from homology"/>
<protein>
    <recommendedName>
        <fullName evidence="1">UDP-N-acetylglucosamine 1-carboxyvinyltransferase</fullName>
        <ecNumber evidence="1">2.5.1.7</ecNumber>
    </recommendedName>
    <alternativeName>
        <fullName evidence="1">Enoylpyruvate transferase</fullName>
    </alternativeName>
    <alternativeName>
        <fullName evidence="1">UDP-N-acetylglucosamine enolpyruvyl transferase</fullName>
        <shortName evidence="1">EPT</shortName>
    </alternativeName>
</protein>
<keyword id="KW-0131">Cell cycle</keyword>
<keyword id="KW-0132">Cell division</keyword>
<keyword id="KW-0133">Cell shape</keyword>
<keyword id="KW-0961">Cell wall biogenesis/degradation</keyword>
<keyword id="KW-0963">Cytoplasm</keyword>
<keyword id="KW-0573">Peptidoglycan synthesis</keyword>
<keyword id="KW-0670">Pyruvate</keyword>
<keyword id="KW-1185">Reference proteome</keyword>
<keyword id="KW-0808">Transferase</keyword>
<gene>
    <name evidence="1" type="primary">murA</name>
    <name type="ordered locus">Abu_1843</name>
</gene>
<reference key="1">
    <citation type="journal article" date="2007" name="PLoS ONE">
        <title>The complete genome sequence and analysis of the Epsilonproteobacterium Arcobacter butzleri.</title>
        <authorList>
            <person name="Miller W.G."/>
            <person name="Parker C.T."/>
            <person name="Rubenfield M."/>
            <person name="Mendz G.L."/>
            <person name="Woesten M.M.S.M."/>
            <person name="Ussery D.W."/>
            <person name="Stolz J.F."/>
            <person name="Binnewies T.T."/>
            <person name="Hallin P.F."/>
            <person name="Wang G."/>
            <person name="Malek J.A."/>
            <person name="Rogosin A."/>
            <person name="Stanker L.H."/>
            <person name="Mandrell R.E."/>
        </authorList>
    </citation>
    <scope>NUCLEOTIDE SEQUENCE [LARGE SCALE GENOMIC DNA]</scope>
    <source>
        <strain>RM4018</strain>
    </source>
</reference>
<accession>A8EVW0</accession>